<protein>
    <recommendedName>
        <fullName>C-type lectin domain family 7 member A</fullName>
    </recommendedName>
    <alternativeName>
        <fullName>Dendritic cell-associated C-type lectin 1</fullName>
        <shortName>DC-associated C-type lectin 1</shortName>
        <shortName>Dectin-1</shortName>
    </alternativeName>
    <cdAntigenName>CD369</cdAntigenName>
</protein>
<accession>Q49BZ4</accession>
<accession>Q3ZCG4</accession>
<accession>Q49BZ5</accession>
<dbReference type="EMBL" id="AY937382">
    <property type="protein sequence ID" value="AAY22120.1"/>
    <property type="molecule type" value="mRNA"/>
</dbReference>
<dbReference type="EMBL" id="AY937383">
    <property type="protein sequence ID" value="AAY22121.1"/>
    <property type="molecule type" value="mRNA"/>
</dbReference>
<dbReference type="EMBL" id="BC102340">
    <property type="protein sequence ID" value="AAI02341.1"/>
    <property type="molecule type" value="mRNA"/>
</dbReference>
<dbReference type="RefSeq" id="NP_001027022.1">
    <molecule id="Q49BZ4-1"/>
    <property type="nucleotide sequence ID" value="NM_001031852.1"/>
</dbReference>
<dbReference type="SMR" id="Q49BZ4"/>
<dbReference type="FunCoup" id="Q49BZ4">
    <property type="interactions" value="385"/>
</dbReference>
<dbReference type="STRING" id="9913.ENSBTAP00000065065"/>
<dbReference type="GlyCosmos" id="Q49BZ4">
    <property type="glycosylation" value="1 site, No reported glycans"/>
</dbReference>
<dbReference type="GlyGen" id="Q49BZ4">
    <property type="glycosylation" value="1 site"/>
</dbReference>
<dbReference type="PaxDb" id="9913-ENSBTAP00000019331"/>
<dbReference type="GeneID" id="532865"/>
<dbReference type="KEGG" id="bta:532865"/>
<dbReference type="CTD" id="64581"/>
<dbReference type="eggNOG" id="KOG4297">
    <property type="taxonomic scope" value="Eukaryota"/>
</dbReference>
<dbReference type="InParanoid" id="Q49BZ4"/>
<dbReference type="OrthoDB" id="2142683at2759"/>
<dbReference type="Proteomes" id="UP000009136">
    <property type="component" value="Unplaced"/>
</dbReference>
<dbReference type="GO" id="GO:0009986">
    <property type="term" value="C:cell surface"/>
    <property type="evidence" value="ECO:0000318"/>
    <property type="project" value="GO_Central"/>
</dbReference>
<dbReference type="GO" id="GO:0005886">
    <property type="term" value="C:plasma membrane"/>
    <property type="evidence" value="ECO:0007669"/>
    <property type="project" value="UniProtKB-SubCell"/>
</dbReference>
<dbReference type="GO" id="GO:0001872">
    <property type="term" value="F:(1-&gt;3)-beta-D-glucan binding"/>
    <property type="evidence" value="ECO:0000250"/>
    <property type="project" value="UniProtKB"/>
</dbReference>
<dbReference type="GO" id="GO:0046872">
    <property type="term" value="F:metal ion binding"/>
    <property type="evidence" value="ECO:0007669"/>
    <property type="project" value="UniProtKB-KW"/>
</dbReference>
<dbReference type="GO" id="GO:0038187">
    <property type="term" value="F:pattern recognition receptor activity"/>
    <property type="evidence" value="ECO:0000250"/>
    <property type="project" value="UniProtKB"/>
</dbReference>
<dbReference type="GO" id="GO:0061760">
    <property type="term" value="P:antifungal innate immune response"/>
    <property type="evidence" value="ECO:0000250"/>
    <property type="project" value="UniProtKB"/>
</dbReference>
<dbReference type="GO" id="GO:0071226">
    <property type="term" value="P:cellular response to molecule of fungal origin"/>
    <property type="evidence" value="ECO:0000250"/>
    <property type="project" value="UniProtKB"/>
</dbReference>
<dbReference type="GO" id="GO:0032491">
    <property type="term" value="P:detection of molecule of fungal origin"/>
    <property type="evidence" value="ECO:0000250"/>
    <property type="project" value="UniProtKB"/>
</dbReference>
<dbReference type="GO" id="GO:0006954">
    <property type="term" value="P:inflammatory response"/>
    <property type="evidence" value="ECO:0007669"/>
    <property type="project" value="UniProtKB-KW"/>
</dbReference>
<dbReference type="GO" id="GO:0045087">
    <property type="term" value="P:innate immune response"/>
    <property type="evidence" value="ECO:0000318"/>
    <property type="project" value="GO_Central"/>
</dbReference>
<dbReference type="GO" id="GO:0006910">
    <property type="term" value="P:phagocytosis, recognition"/>
    <property type="evidence" value="ECO:0000318"/>
    <property type="project" value="GO_Central"/>
</dbReference>
<dbReference type="GO" id="GO:0043123">
    <property type="term" value="P:positive regulation of canonical NF-kappaB signal transduction"/>
    <property type="evidence" value="ECO:0000250"/>
    <property type="project" value="UniProtKB"/>
</dbReference>
<dbReference type="GO" id="GO:0002720">
    <property type="term" value="P:positive regulation of cytokine production involved in immune response"/>
    <property type="evidence" value="ECO:0000318"/>
    <property type="project" value="GO_Central"/>
</dbReference>
<dbReference type="GO" id="GO:2000318">
    <property type="term" value="P:positive regulation of T-helper 17 type immune response"/>
    <property type="evidence" value="ECO:0000250"/>
    <property type="project" value="UniProtKB"/>
</dbReference>
<dbReference type="GO" id="GO:0043122">
    <property type="term" value="P:regulation of canonical NF-kappaB signal transduction"/>
    <property type="evidence" value="ECO:0000318"/>
    <property type="project" value="GO_Central"/>
</dbReference>
<dbReference type="CDD" id="cd03593">
    <property type="entry name" value="CLECT_NK_receptors_like"/>
    <property type="match status" value="1"/>
</dbReference>
<dbReference type="Gene3D" id="3.10.100.10">
    <property type="entry name" value="Mannose-Binding Protein A, subunit A"/>
    <property type="match status" value="1"/>
</dbReference>
<dbReference type="InterPro" id="IPR001304">
    <property type="entry name" value="C-type_lectin-like"/>
</dbReference>
<dbReference type="InterPro" id="IPR016186">
    <property type="entry name" value="C-type_lectin-like/link_sf"/>
</dbReference>
<dbReference type="InterPro" id="IPR042808">
    <property type="entry name" value="CLEC7A"/>
</dbReference>
<dbReference type="InterPro" id="IPR016187">
    <property type="entry name" value="CTDL_fold"/>
</dbReference>
<dbReference type="InterPro" id="IPR033992">
    <property type="entry name" value="NKR-like_CTLD"/>
</dbReference>
<dbReference type="PANTHER" id="PTHR47218">
    <property type="entry name" value="C-TYPE LECTIN DOMAIN FAMILY 7 MEMBER A"/>
    <property type="match status" value="1"/>
</dbReference>
<dbReference type="PANTHER" id="PTHR47218:SF1">
    <property type="entry name" value="C-TYPE LECTIN DOMAIN FAMILY 7 MEMBER A"/>
    <property type="match status" value="1"/>
</dbReference>
<dbReference type="Pfam" id="PF00059">
    <property type="entry name" value="Lectin_C"/>
    <property type="match status" value="1"/>
</dbReference>
<dbReference type="SMART" id="SM00034">
    <property type="entry name" value="CLECT"/>
    <property type="match status" value="1"/>
</dbReference>
<dbReference type="SUPFAM" id="SSF56436">
    <property type="entry name" value="C-type lectin-like"/>
    <property type="match status" value="1"/>
</dbReference>
<dbReference type="PROSITE" id="PS50041">
    <property type="entry name" value="C_TYPE_LECTIN_2"/>
    <property type="match status" value="1"/>
</dbReference>
<feature type="chain" id="PRO_0000269490" description="C-type lectin domain family 7 member A">
    <location>
        <begin position="1"/>
        <end position="247"/>
    </location>
</feature>
<feature type="topological domain" description="Cytoplasmic" evidence="2">
    <location>
        <begin position="1"/>
        <end position="44"/>
    </location>
</feature>
<feature type="transmembrane region" description="Helical; Signal-anchor for type II membrane protein" evidence="2">
    <location>
        <begin position="45"/>
        <end position="65"/>
    </location>
</feature>
<feature type="topological domain" description="Extracellular" evidence="2">
    <location>
        <begin position="66"/>
        <end position="247"/>
    </location>
</feature>
<feature type="domain" description="C-type lectin" evidence="3">
    <location>
        <begin position="127"/>
        <end position="242"/>
    </location>
</feature>
<feature type="region of interest" description="Disordered" evidence="4">
    <location>
        <begin position="81"/>
        <end position="103"/>
    </location>
</feature>
<feature type="short sequence motif" description="ITAM-like">
    <location>
        <begin position="15"/>
        <end position="18"/>
    </location>
</feature>
<feature type="compositionally biased region" description="Polar residues" evidence="4">
    <location>
        <begin position="81"/>
        <end position="101"/>
    </location>
</feature>
<feature type="binding site" evidence="1">
    <location>
        <begin position="146"/>
        <end position="153"/>
    </location>
    <ligand>
        <name>(1,3-beta-D-glucosyl)n</name>
        <dbReference type="ChEBI" id="CHEBI:37671"/>
    </ligand>
</feature>
<feature type="binding site" evidence="1">
    <location>
        <position position="157"/>
    </location>
    <ligand>
        <name>a divalent metal cation</name>
        <dbReference type="ChEBI" id="CHEBI:60240"/>
    </ligand>
</feature>
<feature type="binding site" evidence="1">
    <location>
        <position position="159"/>
    </location>
    <ligand>
        <name>a divalent metal cation</name>
        <dbReference type="ChEBI" id="CHEBI:60240"/>
    </ligand>
</feature>
<feature type="binding site" evidence="1">
    <location>
        <position position="163"/>
    </location>
    <ligand>
        <name>a divalent metal cation</name>
        <dbReference type="ChEBI" id="CHEBI:60240"/>
    </ligand>
</feature>
<feature type="binding site" evidence="1">
    <location>
        <position position="195"/>
    </location>
    <ligand>
        <name>(1,3-beta-D-glucosyl)n</name>
        <dbReference type="ChEBI" id="CHEBI:37671"/>
    </ligand>
</feature>
<feature type="binding site" evidence="1">
    <location>
        <position position="242"/>
    </location>
    <ligand>
        <name>a divalent metal cation</name>
        <dbReference type="ChEBI" id="CHEBI:60240"/>
    </ligand>
</feature>
<feature type="glycosylation site" description="N-linked (GlcNAc...) asparagine" evidence="2">
    <location>
        <position position="91"/>
    </location>
</feature>
<feature type="disulfide bond" evidence="3">
    <location>
        <begin position="120"/>
        <end position="131"/>
    </location>
</feature>
<feature type="disulfide bond" evidence="3">
    <location>
        <begin position="148"/>
        <end position="241"/>
    </location>
</feature>
<feature type="disulfide bond" evidence="3">
    <location>
        <begin position="220"/>
        <end position="233"/>
    </location>
</feature>
<feature type="splice variant" id="VSP_022047" description="In isoform 2." evidence="6 7">
    <location>
        <begin position="69"/>
        <end position="114"/>
    </location>
</feature>
<feature type="sequence conflict" description="In Ref. 1; AAY22120." evidence="8" ref="1">
    <original>V</original>
    <variation>A</variation>
    <location>
        <position position="235"/>
    </location>
</feature>
<sequence>MEYQSSVENLDEDGYTQLDFSSRNITRRSVVSEKGLCAASSHWRLIAVTLGILCSVMLVITVVLSTSGIWRSSSGNNLLKSDSFPSRNKDNQSQPTQSSLEDSVIPTKALTTTGVFSSSCPPNWITHEDSCYLFSTLLDSWDGSKRQCFQLGSHLLKIDSSKELEFISRQVSSQPDHSFWIGLSRRQTEEPWLWEDGSTLLSNLFQIRSTVTEKDSSHNCAWIHVSDIYDQLCSVHSYSICEKKLSV</sequence>
<keyword id="KW-0025">Alternative splicing</keyword>
<keyword id="KW-1003">Cell membrane</keyword>
<keyword id="KW-1015">Disulfide bond</keyword>
<keyword id="KW-0325">Glycoprotein</keyword>
<keyword id="KW-0391">Immunity</keyword>
<keyword id="KW-0395">Inflammatory response</keyword>
<keyword id="KW-0399">Innate immunity</keyword>
<keyword id="KW-0430">Lectin</keyword>
<keyword id="KW-0472">Membrane</keyword>
<keyword id="KW-0479">Metal-binding</keyword>
<keyword id="KW-0597">Phosphoprotein</keyword>
<keyword id="KW-1185">Reference proteome</keyword>
<keyword id="KW-0735">Signal-anchor</keyword>
<keyword id="KW-0812">Transmembrane</keyword>
<keyword id="KW-1133">Transmembrane helix</keyword>
<evidence type="ECO:0000250" key="1">
    <source>
        <dbReference type="UniProtKB" id="Q6QLQ4"/>
    </source>
</evidence>
<evidence type="ECO:0000255" key="2"/>
<evidence type="ECO:0000255" key="3">
    <source>
        <dbReference type="PROSITE-ProRule" id="PRU00040"/>
    </source>
</evidence>
<evidence type="ECO:0000256" key="4">
    <source>
        <dbReference type="SAM" id="MobiDB-lite"/>
    </source>
</evidence>
<evidence type="ECO:0000269" key="5">
    <source>
    </source>
</evidence>
<evidence type="ECO:0000303" key="6">
    <source>
    </source>
</evidence>
<evidence type="ECO:0000303" key="7">
    <source ref="2"/>
</evidence>
<evidence type="ECO:0000305" key="8"/>
<comment type="function">
    <text evidence="1">Lectin that functions as a pattern recognizing receptor (PRR) specific for beta-1,3-linked and beta-1,6-linked glucans, which constitute cell wall constituents from pathogenic bacteria and fungi. Necessary for the TLR2-mediated inflammatory response and activation of NF-kappa-B: upon beta-glucan binding, recruits SYK via its ITAM motif and promotes a signaling cascade that activates some CARD domain-BCL10-MALT1 (CBM) signalosomes, leading to the activation of NF-kappa-B and MAP kinase p38 (MAPK11, MAPK12, MAPK13 and/or MAPK14) pathways which stimulate expression of genes encoding pro-inflammatory cytokines and chemokines. Enhances cytokine production in macrophages and dendritic cells. Mediates production of reactive oxygen species in the cell. Mediates phagocytosis of C.albicans conidia. Binds T-cells in a way that does not involve their surface glycans and plays a role in T-cell activation. Stimulates T-cell proliferation. Induces phosphorylation of SCIMP after binding beta-glucans.</text>
</comment>
<comment type="subunit">
    <text evidence="1">Homodimer. Interacts with SYK; participates in leukocyte activation in presence of fungal pathogens. Interacts with CD37; this interaction controls CLEC7A-mediated IL-6 production.</text>
</comment>
<comment type="subcellular location">
    <subcellularLocation>
        <location evidence="1">Cell membrane</location>
        <topology evidence="1">Single-pass type II membrane protein</topology>
    </subcellularLocation>
</comment>
<comment type="alternative products">
    <event type="alternative splicing"/>
    <isoform>
        <id>Q49BZ4-1</id>
        <name>1</name>
        <sequence type="displayed"/>
    </isoform>
    <isoform>
        <id>Q49BZ4-2</id>
        <name>2</name>
        <sequence type="described" ref="VSP_022047"/>
    </isoform>
</comment>
<comment type="tissue specificity">
    <text evidence="5">Detected in bone marrow, monocytes, macrophages, dendritic cells and natural killer cells.</text>
</comment>
<comment type="PTM">
    <text evidence="1">Phosphorylated on tyrosine residues in response to beta-glucan binding.</text>
</comment>
<proteinExistence type="evidence at transcript level"/>
<name>CLC7A_BOVIN</name>
<gene>
    <name type="primary">CLEC7A</name>
    <name type="synonym">DECTIN1</name>
</gene>
<reference key="1">
    <citation type="journal article" date="2006" name="Vet. Immunol. Immunopathol.">
        <title>Identification and gene expression of the bovine C-type lectin Dectin-1.</title>
        <authorList>
            <person name="Willcocks S."/>
            <person name="Yamakawa Y."/>
            <person name="Stalker A."/>
            <person name="Coffey T.J."/>
            <person name="Goldammer T."/>
            <person name="Werling D."/>
        </authorList>
    </citation>
    <scope>NUCLEOTIDE SEQUENCE [MRNA] (ISOFORMS 1 AND 2)</scope>
    <scope>TISSUE SPECIFICITY</scope>
    <source>
        <tissue>Bone marrow</tissue>
    </source>
</reference>
<reference key="2">
    <citation type="submission" date="2005-08" db="EMBL/GenBank/DDBJ databases">
        <authorList>
            <consortium name="NIH - Mammalian Gene Collection (MGC) project"/>
        </authorList>
    </citation>
    <scope>NUCLEOTIDE SEQUENCE [LARGE SCALE MRNA] (ISOFORM 2)</scope>
    <source>
        <strain>Crossbred X Angus</strain>
        <tissue>Ileum</tissue>
    </source>
</reference>
<organism>
    <name type="scientific">Bos taurus</name>
    <name type="common">Bovine</name>
    <dbReference type="NCBI Taxonomy" id="9913"/>
    <lineage>
        <taxon>Eukaryota</taxon>
        <taxon>Metazoa</taxon>
        <taxon>Chordata</taxon>
        <taxon>Craniata</taxon>
        <taxon>Vertebrata</taxon>
        <taxon>Euteleostomi</taxon>
        <taxon>Mammalia</taxon>
        <taxon>Eutheria</taxon>
        <taxon>Laurasiatheria</taxon>
        <taxon>Artiodactyla</taxon>
        <taxon>Ruminantia</taxon>
        <taxon>Pecora</taxon>
        <taxon>Bovidae</taxon>
        <taxon>Bovinae</taxon>
        <taxon>Bos</taxon>
    </lineage>
</organism>